<comment type="function">
    <text evidence="1">Catalyzes the ATP-dependent amination of UTP to CTP with either L-glutamine or ammonia as the source of nitrogen. Regulates intracellular CTP levels through interactions with the four ribonucleotide triphosphates.</text>
</comment>
<comment type="catalytic activity">
    <reaction evidence="1">
        <text>UTP + L-glutamine + ATP + H2O = CTP + L-glutamate + ADP + phosphate + 2 H(+)</text>
        <dbReference type="Rhea" id="RHEA:26426"/>
        <dbReference type="ChEBI" id="CHEBI:15377"/>
        <dbReference type="ChEBI" id="CHEBI:15378"/>
        <dbReference type="ChEBI" id="CHEBI:29985"/>
        <dbReference type="ChEBI" id="CHEBI:30616"/>
        <dbReference type="ChEBI" id="CHEBI:37563"/>
        <dbReference type="ChEBI" id="CHEBI:43474"/>
        <dbReference type="ChEBI" id="CHEBI:46398"/>
        <dbReference type="ChEBI" id="CHEBI:58359"/>
        <dbReference type="ChEBI" id="CHEBI:456216"/>
        <dbReference type="EC" id="6.3.4.2"/>
    </reaction>
</comment>
<comment type="catalytic activity">
    <reaction evidence="1">
        <text>L-glutamine + H2O = L-glutamate + NH4(+)</text>
        <dbReference type="Rhea" id="RHEA:15889"/>
        <dbReference type="ChEBI" id="CHEBI:15377"/>
        <dbReference type="ChEBI" id="CHEBI:28938"/>
        <dbReference type="ChEBI" id="CHEBI:29985"/>
        <dbReference type="ChEBI" id="CHEBI:58359"/>
    </reaction>
</comment>
<comment type="catalytic activity">
    <reaction evidence="1">
        <text>UTP + NH4(+) + ATP = CTP + ADP + phosphate + 2 H(+)</text>
        <dbReference type="Rhea" id="RHEA:16597"/>
        <dbReference type="ChEBI" id="CHEBI:15378"/>
        <dbReference type="ChEBI" id="CHEBI:28938"/>
        <dbReference type="ChEBI" id="CHEBI:30616"/>
        <dbReference type="ChEBI" id="CHEBI:37563"/>
        <dbReference type="ChEBI" id="CHEBI:43474"/>
        <dbReference type="ChEBI" id="CHEBI:46398"/>
        <dbReference type="ChEBI" id="CHEBI:456216"/>
    </reaction>
</comment>
<comment type="activity regulation">
    <text evidence="1">Allosterically activated by GTP, when glutamine is the substrate; GTP has no effect on the reaction when ammonia is the substrate. The allosteric effector GTP functions by stabilizing the protein conformation that binds the tetrahedral intermediate(s) formed during glutamine hydrolysis. Inhibited by the product CTP, via allosteric rather than competitive inhibition.</text>
</comment>
<comment type="pathway">
    <text evidence="1">Pyrimidine metabolism; CTP biosynthesis via de novo pathway; CTP from UDP: step 2/2.</text>
</comment>
<comment type="subunit">
    <text evidence="1">Homotetramer.</text>
</comment>
<comment type="miscellaneous">
    <text evidence="1">CTPSs have evolved a hybrid strategy for distinguishing between UTP and CTP. The overlapping regions of the product feedback inhibitory and substrate sites recognize a common feature in both compounds, the triphosphate moiety. To differentiate isosteric substrate and product pyrimidine rings, an additional pocket far from the expected kinase/ligase catalytic site, specifically recognizes the cytosine and ribose portions of the product inhibitor.</text>
</comment>
<comment type="similarity">
    <text evidence="1">Belongs to the CTP synthase family.</text>
</comment>
<reference key="1">
    <citation type="submission" date="2007-11" db="EMBL/GenBank/DDBJ databases">
        <authorList>
            <consortium name="The Salmonella enterica serovar Arizonae Genome Sequencing Project"/>
            <person name="McClelland M."/>
            <person name="Sanderson E.K."/>
            <person name="Porwollik S."/>
            <person name="Spieth J."/>
            <person name="Clifton W.S."/>
            <person name="Fulton R."/>
            <person name="Chunyan W."/>
            <person name="Wollam A."/>
            <person name="Shah N."/>
            <person name="Pepin K."/>
            <person name="Bhonagiri V."/>
            <person name="Nash W."/>
            <person name="Johnson M."/>
            <person name="Thiruvilangam P."/>
            <person name="Wilson R."/>
        </authorList>
    </citation>
    <scope>NUCLEOTIDE SEQUENCE [LARGE SCALE GENOMIC DNA]</scope>
    <source>
        <strain>ATCC BAA-731 / CDC346-86 / RSK2980</strain>
    </source>
</reference>
<feature type="chain" id="PRO_1000139557" description="CTP synthase">
    <location>
        <begin position="1"/>
        <end position="545"/>
    </location>
</feature>
<feature type="domain" description="Glutamine amidotransferase type-1" evidence="1">
    <location>
        <begin position="291"/>
        <end position="542"/>
    </location>
</feature>
<feature type="region of interest" description="Amidoligase domain" evidence="1">
    <location>
        <begin position="1"/>
        <end position="266"/>
    </location>
</feature>
<feature type="active site" description="Nucleophile; for glutamine hydrolysis" evidence="1">
    <location>
        <position position="379"/>
    </location>
</feature>
<feature type="active site" evidence="1">
    <location>
        <position position="515"/>
    </location>
</feature>
<feature type="active site" evidence="1">
    <location>
        <position position="517"/>
    </location>
</feature>
<feature type="binding site" evidence="1">
    <location>
        <position position="14"/>
    </location>
    <ligand>
        <name>CTP</name>
        <dbReference type="ChEBI" id="CHEBI:37563"/>
        <note>allosteric inhibitor</note>
    </ligand>
</feature>
<feature type="binding site" evidence="1">
    <location>
        <position position="14"/>
    </location>
    <ligand>
        <name>UTP</name>
        <dbReference type="ChEBI" id="CHEBI:46398"/>
    </ligand>
</feature>
<feature type="binding site" evidence="1">
    <location>
        <begin position="15"/>
        <end position="20"/>
    </location>
    <ligand>
        <name>ATP</name>
        <dbReference type="ChEBI" id="CHEBI:30616"/>
    </ligand>
</feature>
<feature type="binding site" evidence="1">
    <location>
        <position position="72"/>
    </location>
    <ligand>
        <name>ATP</name>
        <dbReference type="ChEBI" id="CHEBI:30616"/>
    </ligand>
</feature>
<feature type="binding site" evidence="1">
    <location>
        <position position="72"/>
    </location>
    <ligand>
        <name>Mg(2+)</name>
        <dbReference type="ChEBI" id="CHEBI:18420"/>
    </ligand>
</feature>
<feature type="binding site" evidence="1">
    <location>
        <position position="140"/>
    </location>
    <ligand>
        <name>Mg(2+)</name>
        <dbReference type="ChEBI" id="CHEBI:18420"/>
    </ligand>
</feature>
<feature type="binding site" evidence="1">
    <location>
        <begin position="147"/>
        <end position="149"/>
    </location>
    <ligand>
        <name>CTP</name>
        <dbReference type="ChEBI" id="CHEBI:37563"/>
        <note>allosteric inhibitor</note>
    </ligand>
</feature>
<feature type="binding site" evidence="1">
    <location>
        <begin position="187"/>
        <end position="192"/>
    </location>
    <ligand>
        <name>CTP</name>
        <dbReference type="ChEBI" id="CHEBI:37563"/>
        <note>allosteric inhibitor</note>
    </ligand>
</feature>
<feature type="binding site" evidence="1">
    <location>
        <begin position="187"/>
        <end position="192"/>
    </location>
    <ligand>
        <name>UTP</name>
        <dbReference type="ChEBI" id="CHEBI:46398"/>
    </ligand>
</feature>
<feature type="binding site" evidence="1">
    <location>
        <position position="223"/>
    </location>
    <ligand>
        <name>CTP</name>
        <dbReference type="ChEBI" id="CHEBI:37563"/>
        <note>allosteric inhibitor</note>
    </ligand>
</feature>
<feature type="binding site" evidence="1">
    <location>
        <position position="223"/>
    </location>
    <ligand>
        <name>UTP</name>
        <dbReference type="ChEBI" id="CHEBI:46398"/>
    </ligand>
</feature>
<feature type="binding site" evidence="1">
    <location>
        <begin position="239"/>
        <end position="241"/>
    </location>
    <ligand>
        <name>ATP</name>
        <dbReference type="ChEBI" id="CHEBI:30616"/>
    </ligand>
</feature>
<feature type="binding site" evidence="1">
    <location>
        <position position="352"/>
    </location>
    <ligand>
        <name>L-glutamine</name>
        <dbReference type="ChEBI" id="CHEBI:58359"/>
    </ligand>
</feature>
<feature type="binding site" evidence="1">
    <location>
        <begin position="380"/>
        <end position="383"/>
    </location>
    <ligand>
        <name>L-glutamine</name>
        <dbReference type="ChEBI" id="CHEBI:58359"/>
    </ligand>
</feature>
<feature type="binding site" evidence="1">
    <location>
        <position position="403"/>
    </location>
    <ligand>
        <name>L-glutamine</name>
        <dbReference type="ChEBI" id="CHEBI:58359"/>
    </ligand>
</feature>
<feature type="binding site" evidence="1">
    <location>
        <position position="470"/>
    </location>
    <ligand>
        <name>L-glutamine</name>
        <dbReference type="ChEBI" id="CHEBI:58359"/>
    </ligand>
</feature>
<evidence type="ECO:0000255" key="1">
    <source>
        <dbReference type="HAMAP-Rule" id="MF_01227"/>
    </source>
</evidence>
<organism>
    <name type="scientific">Salmonella arizonae (strain ATCC BAA-731 / CDC346-86 / RSK2980)</name>
    <dbReference type="NCBI Taxonomy" id="41514"/>
    <lineage>
        <taxon>Bacteria</taxon>
        <taxon>Pseudomonadati</taxon>
        <taxon>Pseudomonadota</taxon>
        <taxon>Gammaproteobacteria</taxon>
        <taxon>Enterobacterales</taxon>
        <taxon>Enterobacteriaceae</taxon>
        <taxon>Salmonella</taxon>
    </lineage>
</organism>
<dbReference type="EC" id="6.3.4.2" evidence="1"/>
<dbReference type="EMBL" id="CP000880">
    <property type="protein sequence ID" value="ABX19962.1"/>
    <property type="molecule type" value="Genomic_DNA"/>
</dbReference>
<dbReference type="SMR" id="A9MF10"/>
<dbReference type="STRING" id="41514.SARI_00008"/>
<dbReference type="MEROPS" id="C26.964"/>
<dbReference type="KEGG" id="ses:SARI_00008"/>
<dbReference type="HOGENOM" id="CLU_011675_5_0_6"/>
<dbReference type="UniPathway" id="UPA00159">
    <property type="reaction ID" value="UER00277"/>
</dbReference>
<dbReference type="Proteomes" id="UP000002084">
    <property type="component" value="Chromosome"/>
</dbReference>
<dbReference type="GO" id="GO:0005829">
    <property type="term" value="C:cytosol"/>
    <property type="evidence" value="ECO:0007669"/>
    <property type="project" value="TreeGrafter"/>
</dbReference>
<dbReference type="GO" id="GO:0005524">
    <property type="term" value="F:ATP binding"/>
    <property type="evidence" value="ECO:0007669"/>
    <property type="project" value="UniProtKB-KW"/>
</dbReference>
<dbReference type="GO" id="GO:0003883">
    <property type="term" value="F:CTP synthase activity"/>
    <property type="evidence" value="ECO:0007669"/>
    <property type="project" value="UniProtKB-UniRule"/>
</dbReference>
<dbReference type="GO" id="GO:0004359">
    <property type="term" value="F:glutaminase activity"/>
    <property type="evidence" value="ECO:0007669"/>
    <property type="project" value="RHEA"/>
</dbReference>
<dbReference type="GO" id="GO:0042802">
    <property type="term" value="F:identical protein binding"/>
    <property type="evidence" value="ECO:0007669"/>
    <property type="project" value="TreeGrafter"/>
</dbReference>
<dbReference type="GO" id="GO:0046872">
    <property type="term" value="F:metal ion binding"/>
    <property type="evidence" value="ECO:0007669"/>
    <property type="project" value="UniProtKB-KW"/>
</dbReference>
<dbReference type="GO" id="GO:0044210">
    <property type="term" value="P:'de novo' CTP biosynthetic process"/>
    <property type="evidence" value="ECO:0007669"/>
    <property type="project" value="UniProtKB-UniRule"/>
</dbReference>
<dbReference type="GO" id="GO:0019856">
    <property type="term" value="P:pyrimidine nucleobase biosynthetic process"/>
    <property type="evidence" value="ECO:0007669"/>
    <property type="project" value="TreeGrafter"/>
</dbReference>
<dbReference type="CDD" id="cd03113">
    <property type="entry name" value="CTPS_N"/>
    <property type="match status" value="1"/>
</dbReference>
<dbReference type="CDD" id="cd01746">
    <property type="entry name" value="GATase1_CTP_Synthase"/>
    <property type="match status" value="1"/>
</dbReference>
<dbReference type="FunFam" id="3.40.50.300:FF:000009">
    <property type="entry name" value="CTP synthase"/>
    <property type="match status" value="1"/>
</dbReference>
<dbReference type="FunFam" id="3.40.50.880:FF:000002">
    <property type="entry name" value="CTP synthase"/>
    <property type="match status" value="1"/>
</dbReference>
<dbReference type="Gene3D" id="3.40.50.880">
    <property type="match status" value="1"/>
</dbReference>
<dbReference type="Gene3D" id="3.40.50.300">
    <property type="entry name" value="P-loop containing nucleotide triphosphate hydrolases"/>
    <property type="match status" value="1"/>
</dbReference>
<dbReference type="HAMAP" id="MF_01227">
    <property type="entry name" value="PyrG"/>
    <property type="match status" value="1"/>
</dbReference>
<dbReference type="InterPro" id="IPR029062">
    <property type="entry name" value="Class_I_gatase-like"/>
</dbReference>
<dbReference type="InterPro" id="IPR004468">
    <property type="entry name" value="CTP_synthase"/>
</dbReference>
<dbReference type="InterPro" id="IPR017456">
    <property type="entry name" value="CTP_synthase_N"/>
</dbReference>
<dbReference type="InterPro" id="IPR017926">
    <property type="entry name" value="GATASE"/>
</dbReference>
<dbReference type="InterPro" id="IPR033828">
    <property type="entry name" value="GATase1_CTP_Synthase"/>
</dbReference>
<dbReference type="InterPro" id="IPR027417">
    <property type="entry name" value="P-loop_NTPase"/>
</dbReference>
<dbReference type="NCBIfam" id="NF003792">
    <property type="entry name" value="PRK05380.1"/>
    <property type="match status" value="1"/>
</dbReference>
<dbReference type="NCBIfam" id="TIGR00337">
    <property type="entry name" value="PyrG"/>
    <property type="match status" value="1"/>
</dbReference>
<dbReference type="PANTHER" id="PTHR11550">
    <property type="entry name" value="CTP SYNTHASE"/>
    <property type="match status" value="1"/>
</dbReference>
<dbReference type="PANTHER" id="PTHR11550:SF0">
    <property type="entry name" value="CTP SYNTHASE-RELATED"/>
    <property type="match status" value="1"/>
</dbReference>
<dbReference type="Pfam" id="PF06418">
    <property type="entry name" value="CTP_synth_N"/>
    <property type="match status" value="1"/>
</dbReference>
<dbReference type="Pfam" id="PF00117">
    <property type="entry name" value="GATase"/>
    <property type="match status" value="1"/>
</dbReference>
<dbReference type="SUPFAM" id="SSF52317">
    <property type="entry name" value="Class I glutamine amidotransferase-like"/>
    <property type="match status" value="1"/>
</dbReference>
<dbReference type="SUPFAM" id="SSF52540">
    <property type="entry name" value="P-loop containing nucleoside triphosphate hydrolases"/>
    <property type="match status" value="1"/>
</dbReference>
<dbReference type="PROSITE" id="PS51273">
    <property type="entry name" value="GATASE_TYPE_1"/>
    <property type="match status" value="1"/>
</dbReference>
<sequence>MTTNYIFVTGGVVSSLGKGIAAASLAAILEARGLNVTIMKLDPYINVDPGTMSPIQHGEVFVTEDGAETDLDLGHYERFIRTKMSRRNNFTTGRIYSDVLRKERRGDYLGATVQVIPHITNAIKERVLEGGEGHDVVLVEIGGTVGDIESLPFLEAIRQMAVEIGREHTLFMHLTLVPYMAAAGEVKTKPTQHSVKELLSIGIQPDILICRSDRAVPANERAKIALFCNVPEKAVISLKDVDSIYKIPGLLKSQGLDDYICKRFSLNCPEANLSEWEQVIYEEANPAGEVTIGMVGKYIELPDAYKSVIEALKHGGLKNRVTVNIKLIDSQDVETRGVEILKDLDAILIPGGFGYRGVEGKIATARYARENNIPYLGICLGMQVALIEFARNVAGMDNANSTEFVPDCKYPVVALITEWRDEDGNVEVRSEKSDLGGTMRLGAQQCQLNDDSLVRQLYGAPTIVERHRHRYEVNNMLLKQIEAAGLRVAGRSGDDQLVEIIEVPNHPWFVACQFHPEFTSTPRDGHPLFAGFVKAASEHQKRQAK</sequence>
<proteinExistence type="inferred from homology"/>
<name>PYRG_SALAR</name>
<accession>A9MF10</accession>
<keyword id="KW-0067">ATP-binding</keyword>
<keyword id="KW-0315">Glutamine amidotransferase</keyword>
<keyword id="KW-0436">Ligase</keyword>
<keyword id="KW-0460">Magnesium</keyword>
<keyword id="KW-0479">Metal-binding</keyword>
<keyword id="KW-0547">Nucleotide-binding</keyword>
<keyword id="KW-0665">Pyrimidine biosynthesis</keyword>
<keyword id="KW-1185">Reference proteome</keyword>
<gene>
    <name evidence="1" type="primary">pyrG</name>
    <name type="ordered locus">SARI_00008</name>
</gene>
<protein>
    <recommendedName>
        <fullName evidence="1">CTP synthase</fullName>
        <ecNumber evidence="1">6.3.4.2</ecNumber>
    </recommendedName>
    <alternativeName>
        <fullName evidence="1">Cytidine 5'-triphosphate synthase</fullName>
    </alternativeName>
    <alternativeName>
        <fullName evidence="1">Cytidine triphosphate synthetase</fullName>
        <shortName evidence="1">CTP synthetase</shortName>
        <shortName evidence="1">CTPS</shortName>
    </alternativeName>
    <alternativeName>
        <fullName evidence="1">UTP--ammonia ligase</fullName>
    </alternativeName>
</protein>